<accession>Q9ZUA0</accession>
<dbReference type="EMBL" id="AC006069">
    <property type="protein sequence ID" value="AAD12699.1"/>
    <property type="molecule type" value="Genomic_DNA"/>
</dbReference>
<dbReference type="EMBL" id="CP002685">
    <property type="protein sequence ID" value="AEC05488.1"/>
    <property type="molecule type" value="Genomic_DNA"/>
</dbReference>
<dbReference type="EMBL" id="BT022017">
    <property type="protein sequence ID" value="AAY25429.1"/>
    <property type="molecule type" value="mRNA"/>
</dbReference>
<dbReference type="EMBL" id="AK226319">
    <property type="protein sequence ID" value="BAE98471.1"/>
    <property type="molecule type" value="mRNA"/>
</dbReference>
<dbReference type="PIR" id="C84428">
    <property type="entry name" value="C84428"/>
</dbReference>
<dbReference type="RefSeq" id="NP_178281.1">
    <property type="nucleotide sequence ID" value="NM_126233.6"/>
</dbReference>
<dbReference type="SMR" id="Q9ZUA0"/>
<dbReference type="BioGRID" id="104">
    <property type="interactions" value="22"/>
</dbReference>
<dbReference type="FunCoup" id="Q9ZUA0">
    <property type="interactions" value="4773"/>
</dbReference>
<dbReference type="STRING" id="3702.Q9ZUA0"/>
<dbReference type="GlyCosmos" id="Q9ZUA0">
    <property type="glycosylation" value="3 sites, No reported glycans"/>
</dbReference>
<dbReference type="GlyGen" id="Q9ZUA0">
    <property type="glycosylation" value="3 sites"/>
</dbReference>
<dbReference type="iPTMnet" id="Q9ZUA0"/>
<dbReference type="PaxDb" id="3702-AT2G01720.1"/>
<dbReference type="ProteomicsDB" id="248670"/>
<dbReference type="EnsemblPlants" id="AT2G01720.1">
    <property type="protein sequence ID" value="AT2G01720.1"/>
    <property type="gene ID" value="AT2G01720"/>
</dbReference>
<dbReference type="GeneID" id="814701"/>
<dbReference type="Gramene" id="AT2G01720.1">
    <property type="protein sequence ID" value="AT2G01720.1"/>
    <property type="gene ID" value="AT2G01720"/>
</dbReference>
<dbReference type="KEGG" id="ath:AT2G01720"/>
<dbReference type="Araport" id="AT2G01720"/>
<dbReference type="TAIR" id="AT2G01720">
    <property type="gene designation" value="OST1A"/>
</dbReference>
<dbReference type="eggNOG" id="KOG2291">
    <property type="taxonomic scope" value="Eukaryota"/>
</dbReference>
<dbReference type="HOGENOM" id="CLU_031381_0_1_1"/>
<dbReference type="InParanoid" id="Q9ZUA0"/>
<dbReference type="OMA" id="THYTLGY"/>
<dbReference type="PhylomeDB" id="Q9ZUA0"/>
<dbReference type="UniPathway" id="UPA00378"/>
<dbReference type="PRO" id="PR:Q9ZUA0"/>
<dbReference type="Proteomes" id="UP000006548">
    <property type="component" value="Chromosome 2"/>
</dbReference>
<dbReference type="ExpressionAtlas" id="Q9ZUA0">
    <property type="expression patterns" value="baseline and differential"/>
</dbReference>
<dbReference type="GO" id="GO:0005783">
    <property type="term" value="C:endoplasmic reticulum"/>
    <property type="evidence" value="ECO:0000314"/>
    <property type="project" value="TAIR"/>
</dbReference>
<dbReference type="GO" id="GO:0005789">
    <property type="term" value="C:endoplasmic reticulum membrane"/>
    <property type="evidence" value="ECO:0007669"/>
    <property type="project" value="UniProtKB-SubCell"/>
</dbReference>
<dbReference type="GO" id="GO:0005739">
    <property type="term" value="C:mitochondrion"/>
    <property type="evidence" value="ECO:0007005"/>
    <property type="project" value="TAIR"/>
</dbReference>
<dbReference type="GO" id="GO:0009505">
    <property type="term" value="C:plant-type cell wall"/>
    <property type="evidence" value="ECO:0007005"/>
    <property type="project" value="TAIR"/>
</dbReference>
<dbReference type="GO" id="GO:0000325">
    <property type="term" value="C:plant-type vacuole"/>
    <property type="evidence" value="ECO:0007005"/>
    <property type="project" value="TAIR"/>
</dbReference>
<dbReference type="GO" id="GO:0006487">
    <property type="term" value="P:protein N-linked glycosylation"/>
    <property type="evidence" value="ECO:0000315"/>
    <property type="project" value="TAIR"/>
</dbReference>
<dbReference type="InterPro" id="IPR007676">
    <property type="entry name" value="Ribophorin_I"/>
</dbReference>
<dbReference type="PANTHER" id="PTHR21049:SF2">
    <property type="entry name" value="DOLICHYL-DIPHOSPHOOLIGOSACCHARIDE--PROTEIN GLYCOSYLTRANSFERASE SUBUNIT 1B"/>
    <property type="match status" value="1"/>
</dbReference>
<dbReference type="PANTHER" id="PTHR21049">
    <property type="entry name" value="RIBOPHORIN I"/>
    <property type="match status" value="1"/>
</dbReference>
<dbReference type="Pfam" id="PF04597">
    <property type="entry name" value="Ribophorin_I"/>
    <property type="match status" value="1"/>
</dbReference>
<organism>
    <name type="scientific">Arabidopsis thaliana</name>
    <name type="common">Mouse-ear cress</name>
    <dbReference type="NCBI Taxonomy" id="3702"/>
    <lineage>
        <taxon>Eukaryota</taxon>
        <taxon>Viridiplantae</taxon>
        <taxon>Streptophyta</taxon>
        <taxon>Embryophyta</taxon>
        <taxon>Tracheophyta</taxon>
        <taxon>Spermatophyta</taxon>
        <taxon>Magnoliopsida</taxon>
        <taxon>eudicotyledons</taxon>
        <taxon>Gunneridae</taxon>
        <taxon>Pentapetalae</taxon>
        <taxon>rosids</taxon>
        <taxon>malvids</taxon>
        <taxon>Brassicales</taxon>
        <taxon>Brassicaceae</taxon>
        <taxon>Camelineae</taxon>
        <taxon>Arabidopsis</taxon>
    </lineage>
</organism>
<comment type="function">
    <text evidence="2">Subunit of the oligosaccharyl transferase (OST) complex that catalyzes the initial transfer of a defined glycan (Glc(3)Man(9)GlcNAc(2) in eukaryotes) from the lipid carrier dolichol-pyrophosphate to an asparagine residue within an Asn-X-Ser/Thr consensus motif in nascent polypeptide chains, the first step in protein N-glycosylation. N-glycosylation occurs cotranslationally and the complex associates with the Sec61 complex at the channel-forming translocon complex that mediates protein translocation across the endoplasmic reticulum (ER). All subunits are required for a maximal enzyme activity.</text>
</comment>
<comment type="pathway">
    <text>Protein modification; protein glycosylation.</text>
</comment>
<comment type="subunit">
    <text evidence="2">Component of the oligosaccharyltransferase (OST) complex.</text>
</comment>
<comment type="subcellular location">
    <subcellularLocation>
        <location evidence="1">Endoplasmic reticulum membrane</location>
        <topology evidence="1">Single-pass type I membrane protein</topology>
    </subcellularLocation>
</comment>
<comment type="similarity">
    <text evidence="5">Belongs to the OST1 family.</text>
</comment>
<gene>
    <name type="primary">OST1B</name>
    <name type="synonym">RPN1B</name>
    <name type="ordered locus">At2g01720</name>
    <name type="ORF">T8O11.11</name>
</gene>
<feature type="signal peptide" evidence="3">
    <location>
        <begin position="1"/>
        <end position="24"/>
    </location>
</feature>
<feature type="chain" id="PRO_0000420808" description="Dolichyl-diphosphooligosaccharide--protein glycosyltransferase subunit 1B">
    <location>
        <begin position="25"/>
        <end position="464"/>
    </location>
</feature>
<feature type="topological domain" description="Lumenal" evidence="3">
    <location>
        <begin position="25"/>
        <end position="436"/>
    </location>
</feature>
<feature type="transmembrane region" description="Helical" evidence="3">
    <location>
        <begin position="437"/>
        <end position="457"/>
    </location>
</feature>
<feature type="topological domain" description="Cytoplasmic" evidence="3">
    <location>
        <begin position="458"/>
        <end position="464"/>
    </location>
</feature>
<feature type="glycosylation site" description="N-linked (GlcNAc...) asparagine" evidence="3">
    <location>
        <position position="106"/>
    </location>
</feature>
<feature type="glycosylation site" description="N-linked (GlcNAc...) asparagine" evidence="3">
    <location>
        <position position="298"/>
    </location>
</feature>
<feature type="glycosylation site" description="N-linked (GlcNAc...) asparagine" evidence="3">
    <location>
        <position position="352"/>
    </location>
</feature>
<feature type="cross-link" description="Glycyl lysine isopeptide (Lys-Gly) (interchain with G-Cter in ubiquitin)" evidence="4">
    <location>
        <position position="310"/>
    </location>
</feature>
<keyword id="KW-0256">Endoplasmic reticulum</keyword>
<keyword id="KW-0325">Glycoprotein</keyword>
<keyword id="KW-1017">Isopeptide bond</keyword>
<keyword id="KW-0472">Membrane</keyword>
<keyword id="KW-1185">Reference proteome</keyword>
<keyword id="KW-0732">Signal</keyword>
<keyword id="KW-0812">Transmembrane</keyword>
<keyword id="KW-1133">Transmembrane helix</keyword>
<keyword id="KW-0832">Ubl conjugation</keyword>
<protein>
    <recommendedName>
        <fullName>Dolichyl-diphosphooligosaccharide--protein glycosyltransferase subunit 1B</fullName>
    </recommendedName>
    <alternativeName>
        <fullName>Ribophorin IB</fullName>
        <shortName>RPN-IB</shortName>
    </alternativeName>
    <alternativeName>
        <fullName>Ribophorin-1B</fullName>
    </alternativeName>
</protein>
<reference key="1">
    <citation type="journal article" date="1999" name="Nature">
        <title>Sequence and analysis of chromosome 2 of the plant Arabidopsis thaliana.</title>
        <authorList>
            <person name="Lin X."/>
            <person name="Kaul S."/>
            <person name="Rounsley S.D."/>
            <person name="Shea T.P."/>
            <person name="Benito M.-I."/>
            <person name="Town C.D."/>
            <person name="Fujii C.Y."/>
            <person name="Mason T.M."/>
            <person name="Bowman C.L."/>
            <person name="Barnstead M.E."/>
            <person name="Feldblyum T.V."/>
            <person name="Buell C.R."/>
            <person name="Ketchum K.A."/>
            <person name="Lee J.J."/>
            <person name="Ronning C.M."/>
            <person name="Koo H.L."/>
            <person name="Moffat K.S."/>
            <person name="Cronin L.A."/>
            <person name="Shen M."/>
            <person name="Pai G."/>
            <person name="Van Aken S."/>
            <person name="Umayam L."/>
            <person name="Tallon L.J."/>
            <person name="Gill J.E."/>
            <person name="Adams M.D."/>
            <person name="Carrera A.J."/>
            <person name="Creasy T.H."/>
            <person name="Goodman H.M."/>
            <person name="Somerville C.R."/>
            <person name="Copenhaver G.P."/>
            <person name="Preuss D."/>
            <person name="Nierman W.C."/>
            <person name="White O."/>
            <person name="Eisen J.A."/>
            <person name="Salzberg S.L."/>
            <person name="Fraser C.M."/>
            <person name="Venter J.C."/>
        </authorList>
    </citation>
    <scope>NUCLEOTIDE SEQUENCE [LARGE SCALE GENOMIC DNA]</scope>
    <source>
        <strain>cv. Columbia</strain>
    </source>
</reference>
<reference key="2">
    <citation type="journal article" date="2017" name="Plant J.">
        <title>Araport11: a complete reannotation of the Arabidopsis thaliana reference genome.</title>
        <authorList>
            <person name="Cheng C.Y."/>
            <person name="Krishnakumar V."/>
            <person name="Chan A.P."/>
            <person name="Thibaud-Nissen F."/>
            <person name="Schobel S."/>
            <person name="Town C.D."/>
        </authorList>
    </citation>
    <scope>GENOME REANNOTATION</scope>
    <source>
        <strain>cv. Columbia</strain>
    </source>
</reference>
<reference key="3">
    <citation type="submission" date="2005-05" db="EMBL/GenBank/DDBJ databases">
        <title>Arabidopsis ORF clones.</title>
        <authorList>
            <person name="Kim C.J."/>
            <person name="Chen H."/>
            <person name="Cheuk R.F."/>
            <person name="Shinn P."/>
            <person name="Ecker J.R."/>
        </authorList>
    </citation>
    <scope>NUCLEOTIDE SEQUENCE [LARGE SCALE MRNA]</scope>
    <source>
        <strain>cv. Columbia</strain>
    </source>
</reference>
<reference key="4">
    <citation type="submission" date="2006-07" db="EMBL/GenBank/DDBJ databases">
        <title>Large-scale analysis of RIKEN Arabidopsis full-length (RAFL) cDNAs.</title>
        <authorList>
            <person name="Totoki Y."/>
            <person name="Seki M."/>
            <person name="Ishida J."/>
            <person name="Nakajima M."/>
            <person name="Enju A."/>
            <person name="Kamiya A."/>
            <person name="Narusaka M."/>
            <person name="Shin-i T."/>
            <person name="Nakagawa M."/>
            <person name="Sakamoto N."/>
            <person name="Oishi K."/>
            <person name="Kohara Y."/>
            <person name="Kobayashi M."/>
            <person name="Toyoda A."/>
            <person name="Sakaki Y."/>
            <person name="Sakurai T."/>
            <person name="Iida K."/>
            <person name="Akiyama K."/>
            <person name="Satou M."/>
            <person name="Toyoda T."/>
            <person name="Konagaya A."/>
            <person name="Carninci P."/>
            <person name="Kawai J."/>
            <person name="Hayashizaki Y."/>
            <person name="Shinozaki K."/>
        </authorList>
    </citation>
    <scope>NUCLEOTIDE SEQUENCE [LARGE SCALE MRNA]</scope>
    <source>
        <strain>cv. Columbia</strain>
    </source>
</reference>
<reference key="5">
    <citation type="journal article" date="2009" name="Plant J.">
        <title>Tandem affinity purification and mass spectrometric analysis of ubiquitylated proteins in Arabidopsis.</title>
        <authorList>
            <person name="Saracco S.A."/>
            <person name="Hansson M."/>
            <person name="Scalf M."/>
            <person name="Walker J.M."/>
            <person name="Smith L.M."/>
            <person name="Vierstra R.D."/>
        </authorList>
    </citation>
    <scope>UBIQUITINATION [LARGE SCALE ANALYSIS] AT LYS-310</scope>
    <scope>IDENTIFICATION BY MASS SPECTROMETRY</scope>
</reference>
<proteinExistence type="evidence at protein level"/>
<sequence length="464" mass="52219">MAARIGIFSVFVAVLLSISAFSSAQDLQIVNAERRIDLSSHIVKAFLTLKVENIGKDPAAEMLLAFPPTQIKNLAMVQALATTGKKKKKTYLPLDVKPTEQPDAPNDTGYYRVTFISPLGPGETVSLEVLYILTHSLEPFPVEITQSESQLVYYHDSAVILSPYHVKQQTTFIKTPSTRVESFTSIEPANRAGKEIKYGPYENRASYSYTPVIIHFENNSPFAVVEELVREIEISHWGSLQITENYRLTHGGARHKGVFSRVDYQSKRSVSGASSFNALLAVLPPRVNSVYYRDEIGNISTSHLRTGFRKSELEFEPRYPLFGGWSATFIIGYRVPLEDYLFEASDGRRYLNFTFGCPLVETIVNKLTIKVVLPEGSKDPSAVLPFTVNQELQVKYSYLDIVGRTVVVLQKDNVVPTHNVPFQVYYTFKPIYMLAEPFMLVSAFFLVFVASLAYVHIDLNIVRK</sequence>
<evidence type="ECO:0000250" key="1"/>
<evidence type="ECO:0000250" key="2">
    <source>
        <dbReference type="UniProtKB" id="P41543"/>
    </source>
</evidence>
<evidence type="ECO:0000255" key="3"/>
<evidence type="ECO:0000269" key="4">
    <source>
    </source>
</evidence>
<evidence type="ECO:0000305" key="5"/>
<name>OST1B_ARATH</name>